<proteinExistence type="inferred from homology"/>
<reference key="1">
    <citation type="journal article" date="2007" name="PLoS Genet.">
        <title>Being pathogenic, plastic, and sexual while living with a nearly minimal bacterial genome.</title>
        <authorList>
            <person name="Sirand-Pugnet P."/>
            <person name="Lartigue C."/>
            <person name="Marenda M."/>
            <person name="Jacob D."/>
            <person name="Barre A."/>
            <person name="Barbe V."/>
            <person name="Schenowitz C."/>
            <person name="Mangenot S."/>
            <person name="Couloux A."/>
            <person name="Segurens B."/>
            <person name="de Daruvar A."/>
            <person name="Blanchard A."/>
            <person name="Citti C."/>
        </authorList>
    </citation>
    <scope>NUCLEOTIDE SEQUENCE [LARGE SCALE GENOMIC DNA]</scope>
    <source>
        <strain>NCTC 10123 / CIP 59.7 / PG2</strain>
    </source>
</reference>
<evidence type="ECO:0000255" key="1">
    <source>
        <dbReference type="HAMAP-Rule" id="MF_01318"/>
    </source>
</evidence>
<evidence type="ECO:0000305" key="2"/>
<feature type="chain" id="PRO_1000141434" description="Large ribosomal subunit protein uL1">
    <location>
        <begin position="1"/>
        <end position="231"/>
    </location>
</feature>
<dbReference type="EMBL" id="CU179680">
    <property type="protein sequence ID" value="CAL58779.1"/>
    <property type="molecule type" value="Genomic_DNA"/>
</dbReference>
<dbReference type="RefSeq" id="WP_011949262.1">
    <property type="nucleotide sequence ID" value="NC_009497.1"/>
</dbReference>
<dbReference type="SMR" id="A5IXM0"/>
<dbReference type="STRING" id="347257.MAG0810"/>
<dbReference type="GeneID" id="93357852"/>
<dbReference type="KEGG" id="maa:MAG0810"/>
<dbReference type="HOGENOM" id="CLU_062853_0_0_14"/>
<dbReference type="Proteomes" id="UP000007065">
    <property type="component" value="Chromosome"/>
</dbReference>
<dbReference type="GO" id="GO:0015934">
    <property type="term" value="C:large ribosomal subunit"/>
    <property type="evidence" value="ECO:0007669"/>
    <property type="project" value="InterPro"/>
</dbReference>
<dbReference type="GO" id="GO:0019843">
    <property type="term" value="F:rRNA binding"/>
    <property type="evidence" value="ECO:0007669"/>
    <property type="project" value="UniProtKB-UniRule"/>
</dbReference>
<dbReference type="GO" id="GO:0003735">
    <property type="term" value="F:structural constituent of ribosome"/>
    <property type="evidence" value="ECO:0007669"/>
    <property type="project" value="InterPro"/>
</dbReference>
<dbReference type="GO" id="GO:0000049">
    <property type="term" value="F:tRNA binding"/>
    <property type="evidence" value="ECO:0007669"/>
    <property type="project" value="UniProtKB-KW"/>
</dbReference>
<dbReference type="GO" id="GO:0006417">
    <property type="term" value="P:regulation of translation"/>
    <property type="evidence" value="ECO:0007669"/>
    <property type="project" value="UniProtKB-KW"/>
</dbReference>
<dbReference type="GO" id="GO:0006412">
    <property type="term" value="P:translation"/>
    <property type="evidence" value="ECO:0007669"/>
    <property type="project" value="UniProtKB-UniRule"/>
</dbReference>
<dbReference type="CDD" id="cd00403">
    <property type="entry name" value="Ribosomal_L1"/>
    <property type="match status" value="1"/>
</dbReference>
<dbReference type="FunFam" id="3.40.50.790:FF:000001">
    <property type="entry name" value="50S ribosomal protein L1"/>
    <property type="match status" value="1"/>
</dbReference>
<dbReference type="Gene3D" id="3.30.190.20">
    <property type="match status" value="1"/>
</dbReference>
<dbReference type="Gene3D" id="3.40.50.790">
    <property type="match status" value="1"/>
</dbReference>
<dbReference type="HAMAP" id="MF_01318_B">
    <property type="entry name" value="Ribosomal_uL1_B"/>
    <property type="match status" value="1"/>
</dbReference>
<dbReference type="InterPro" id="IPR005878">
    <property type="entry name" value="Ribosom_uL1_bac-type"/>
</dbReference>
<dbReference type="InterPro" id="IPR002143">
    <property type="entry name" value="Ribosomal_uL1"/>
</dbReference>
<dbReference type="InterPro" id="IPR023674">
    <property type="entry name" value="Ribosomal_uL1-like"/>
</dbReference>
<dbReference type="InterPro" id="IPR028364">
    <property type="entry name" value="Ribosomal_uL1/biogenesis"/>
</dbReference>
<dbReference type="InterPro" id="IPR016095">
    <property type="entry name" value="Ribosomal_uL1_3-a/b-sand"/>
</dbReference>
<dbReference type="InterPro" id="IPR023673">
    <property type="entry name" value="Ribosomal_uL1_CS"/>
</dbReference>
<dbReference type="NCBIfam" id="TIGR01169">
    <property type="entry name" value="rplA_bact"/>
    <property type="match status" value="1"/>
</dbReference>
<dbReference type="PANTHER" id="PTHR36427">
    <property type="entry name" value="54S RIBOSOMAL PROTEIN L1, MITOCHONDRIAL"/>
    <property type="match status" value="1"/>
</dbReference>
<dbReference type="PANTHER" id="PTHR36427:SF3">
    <property type="entry name" value="LARGE RIBOSOMAL SUBUNIT PROTEIN UL1M"/>
    <property type="match status" value="1"/>
</dbReference>
<dbReference type="Pfam" id="PF00687">
    <property type="entry name" value="Ribosomal_L1"/>
    <property type="match status" value="1"/>
</dbReference>
<dbReference type="PIRSF" id="PIRSF002155">
    <property type="entry name" value="Ribosomal_L1"/>
    <property type="match status" value="1"/>
</dbReference>
<dbReference type="SUPFAM" id="SSF56808">
    <property type="entry name" value="Ribosomal protein L1"/>
    <property type="match status" value="1"/>
</dbReference>
<dbReference type="PROSITE" id="PS01199">
    <property type="entry name" value="RIBOSOMAL_L1"/>
    <property type="match status" value="1"/>
</dbReference>
<comment type="function">
    <text evidence="1">Binds directly to 23S rRNA. The L1 stalk is quite mobile in the ribosome, and is involved in E site tRNA release.</text>
</comment>
<comment type="function">
    <text evidence="1">Protein L1 is also a translational repressor protein, it controls the translation of the L11 operon by binding to its mRNA.</text>
</comment>
<comment type="subunit">
    <text evidence="1">Part of the 50S ribosomal subunit.</text>
</comment>
<comment type="similarity">
    <text evidence="1">Belongs to the universal ribosomal protein uL1 family.</text>
</comment>
<keyword id="KW-1185">Reference proteome</keyword>
<keyword id="KW-0678">Repressor</keyword>
<keyword id="KW-0687">Ribonucleoprotein</keyword>
<keyword id="KW-0689">Ribosomal protein</keyword>
<keyword id="KW-0694">RNA-binding</keyword>
<keyword id="KW-0699">rRNA-binding</keyword>
<keyword id="KW-0810">Translation regulation</keyword>
<keyword id="KW-0820">tRNA-binding</keyword>
<accession>A5IXM0</accession>
<sequence>MSAKGGKKIQNARSSFDKNIAYDLAEAVEIVKRTSYAKFDASVDLVFKLNLDVRKADQQLRGSVLLPNGTGKSISVLVVTNNVEKQKLATAAGADQVVDGQTLEQKIKEDIFDFDVMVADPAMMPLLGKYGKKLGPKGLMPNPKTGTVTPTPEKAVEELKKGKANYRTDKAGVVHTLVGKVSMDTEKLVENIKTVISLIKRLKPSAVKGTYIQNIVLSATMGPGVKVKIEK</sequence>
<protein>
    <recommendedName>
        <fullName evidence="1">Large ribosomal subunit protein uL1</fullName>
    </recommendedName>
    <alternativeName>
        <fullName evidence="2">50S ribosomal protein L1</fullName>
    </alternativeName>
</protein>
<name>RL1_MYCAP</name>
<gene>
    <name evidence="1" type="primary">rplA</name>
    <name type="ordered locus">MAG0810</name>
</gene>
<organism>
    <name type="scientific">Mycoplasmopsis agalactiae (strain NCTC 10123 / CIP 59.7 / PG2)</name>
    <name type="common">Mycoplasma agalactiae</name>
    <dbReference type="NCBI Taxonomy" id="347257"/>
    <lineage>
        <taxon>Bacteria</taxon>
        <taxon>Bacillati</taxon>
        <taxon>Mycoplasmatota</taxon>
        <taxon>Mycoplasmoidales</taxon>
        <taxon>Metamycoplasmataceae</taxon>
        <taxon>Mycoplasmopsis</taxon>
    </lineage>
</organism>